<reference key="1">
    <citation type="journal article" date="2001" name="J. Mol. Biol.">
        <title>An expressed sequence tag (EST) data mining strategy succeeding in the discovery of new G-protein coupled receptors.</title>
        <authorList>
            <person name="Wittenberger T."/>
            <person name="Schaller H.C."/>
            <person name="Hellebrand S."/>
        </authorList>
    </citation>
    <scope>NUCLEOTIDE SEQUENCE [MRNA]</scope>
    <scope>TISSUE SPECIFICITY</scope>
    <source>
        <strain>C57BL/6J</strain>
    </source>
</reference>
<reference key="2">
    <citation type="journal article" date="2004" name="Genome Res.">
        <title>The status, quality, and expansion of the NIH full-length cDNA project: the Mammalian Gene Collection (MGC).</title>
        <authorList>
            <consortium name="The MGC Project Team"/>
        </authorList>
    </citation>
    <scope>NUCLEOTIDE SEQUENCE [LARGE SCALE MRNA]</scope>
    <source>
        <strain>Czech II</strain>
        <tissue>Mammary tumor</tissue>
    </source>
</reference>
<reference key="3">
    <citation type="journal article" date="2006" name="J. Biol. Chem.">
        <title>Medium-chain fatty acids as ligands for orphan G protein-coupled receptor GPR84.</title>
        <authorList>
            <person name="Wang J."/>
            <person name="Wu X."/>
            <person name="Simonavicius N."/>
            <person name="Tian H."/>
            <person name="Ling L."/>
        </authorList>
    </citation>
    <scope>TISSUE SPECIFICITY</scope>
    <scope>INDUCTION</scope>
</reference>
<reference key="4">
    <citation type="journal article" date="2009" name="Immunity">
        <title>The phagosomal proteome in interferon-gamma-activated macrophages.</title>
        <authorList>
            <person name="Trost M."/>
            <person name="English L."/>
            <person name="Lemieux S."/>
            <person name="Courcelles M."/>
            <person name="Desjardins M."/>
            <person name="Thibault P."/>
        </authorList>
    </citation>
    <scope>PHOSPHORYLATION [LARGE SCALE ANALYSIS] AT SER-221 AND SER-224</scope>
    <scope>IDENTIFICATION BY MASS SPECTROMETRY [LARGE SCALE ANALYSIS]</scope>
</reference>
<reference key="5">
    <citation type="journal article" date="2018" name="Front. Immunol.">
        <title>Activation of the Immune-Metabolic Receptor GPR84 Enhances Inflammation and Phagocytosis in Macrophages.</title>
        <authorList>
            <person name="Recio C."/>
            <person name="Lucy D."/>
            <person name="Purvis G.S.D."/>
            <person name="Iveson P."/>
            <person name="Zeboudj L."/>
            <person name="Iqbal A.J."/>
            <person name="Lin D."/>
            <person name="O'Callaghan C."/>
            <person name="Davison L."/>
            <person name="Griesbach E."/>
            <person name="Russell A.J."/>
            <person name="Wynne G.M."/>
            <person name="Dib L."/>
            <person name="Monaco C."/>
            <person name="Greaves D.R."/>
        </authorList>
    </citation>
    <scope>FUNCTION</scope>
    <scope>INDUCTION</scope>
</reference>
<reference key="6">
    <citation type="journal article" date="2022" name="Acta Pharmacol. Sin.">
        <title>GPR84 signaling promotes intestinal mucosal inflammation via enhancing NLRP3 inflammasome activation in macrophages.</title>
        <authorList>
            <person name="Zhang Q."/>
            <person name="Chen L.H."/>
            <person name="Yang H."/>
            <person name="Fang Y.C."/>
            <person name="Wang S.W."/>
            <person name="Wang M."/>
            <person name="Yuan Q.T."/>
            <person name="Wu W."/>
            <person name="Zhang Y.M."/>
            <person name="Liu Z.J."/>
            <person name="Nan F.J."/>
            <person name="Xie X."/>
        </authorList>
    </citation>
    <scope>FUNCTION</scope>
    <scope>DISRUPTION PHENOTYPE</scope>
</reference>
<reference key="7">
    <citation type="journal article" date="2023" name="Acta Pharmacol. Sin.">
        <title>GPR84 regulates pulmonary inflammation by modulating neutrophil functions.</title>
        <authorList>
            <person name="Wang S.W."/>
            <person name="Zhang Q."/>
            <person name="Lu D."/>
            <person name="Fang Y.C."/>
            <person name="Yan X.C."/>
            <person name="Chen J."/>
            <person name="Xia Z.K."/>
            <person name="Yuan Q.T."/>
            <person name="Chen L.H."/>
            <person name="Zhang Y.M."/>
            <person name="Nan F.J."/>
            <person name="Xie X."/>
        </authorList>
    </citation>
    <scope>FUNCTION</scope>
    <scope>TISSUE SPECIFICITY</scope>
    <scope>DISRUPTION PHENOTYPE</scope>
    <scope>INDUCTION BY LPS</scope>
</reference>
<feature type="chain" id="PRO_0000069590" description="G-protein coupled receptor 84">
    <location>
        <begin position="1"/>
        <end position="396"/>
    </location>
</feature>
<feature type="topological domain" description="Extracellular" evidence="2">
    <location>
        <begin position="1"/>
        <end position="21"/>
    </location>
</feature>
<feature type="transmembrane region" description="Helical; Name=1" evidence="2">
    <location>
        <begin position="22"/>
        <end position="42"/>
    </location>
</feature>
<feature type="topological domain" description="Cytoplasmic" evidence="2">
    <location>
        <begin position="43"/>
        <end position="57"/>
    </location>
</feature>
<feature type="transmembrane region" description="Helical; Name=2" evidence="2">
    <location>
        <begin position="58"/>
        <end position="78"/>
    </location>
</feature>
<feature type="topological domain" description="Extracellular" evidence="2">
    <location>
        <begin position="79"/>
        <end position="94"/>
    </location>
</feature>
<feature type="transmembrane region" description="Helical; Name=3" evidence="2">
    <location>
        <begin position="95"/>
        <end position="115"/>
    </location>
</feature>
<feature type="topological domain" description="Cytoplasmic" evidence="2">
    <location>
        <begin position="116"/>
        <end position="135"/>
    </location>
</feature>
<feature type="transmembrane region" description="Helical; Name=4" evidence="2">
    <location>
        <begin position="136"/>
        <end position="156"/>
    </location>
</feature>
<feature type="topological domain" description="Extracellular" evidence="2">
    <location>
        <begin position="157"/>
        <end position="180"/>
    </location>
</feature>
<feature type="transmembrane region" description="Helical; Name=5" evidence="2">
    <location>
        <begin position="181"/>
        <end position="201"/>
    </location>
</feature>
<feature type="topological domain" description="Cytoplasmic" evidence="2">
    <location>
        <begin position="202"/>
        <end position="320"/>
    </location>
</feature>
<feature type="transmembrane region" description="Helical; Name=6" evidence="2">
    <location>
        <begin position="321"/>
        <end position="341"/>
    </location>
</feature>
<feature type="topological domain" description="Extracellular" evidence="2">
    <location>
        <begin position="342"/>
        <end position="352"/>
    </location>
</feature>
<feature type="transmembrane region" description="Helical; Name=7" evidence="2">
    <location>
        <begin position="353"/>
        <end position="373"/>
    </location>
</feature>
<feature type="topological domain" description="Cytoplasmic" evidence="2">
    <location>
        <begin position="374"/>
        <end position="396"/>
    </location>
</feature>
<feature type="region of interest" description="Disordered" evidence="4">
    <location>
        <begin position="241"/>
        <end position="310"/>
    </location>
</feature>
<feature type="compositionally biased region" description="Polar residues" evidence="4">
    <location>
        <begin position="253"/>
        <end position="269"/>
    </location>
</feature>
<feature type="compositionally biased region" description="Basic and acidic residues" evidence="4">
    <location>
        <begin position="290"/>
        <end position="308"/>
    </location>
</feature>
<feature type="modified residue" description="Phosphoserine" evidence="10">
    <location>
        <position position="221"/>
    </location>
</feature>
<feature type="modified residue" description="Phosphoserine" evidence="10">
    <location>
        <position position="224"/>
    </location>
</feature>
<feature type="modified residue" description="Phosphothreonine" evidence="1">
    <location>
        <position position="263"/>
    </location>
</feature>
<feature type="modified residue" description="Phosphothreonine" evidence="1">
    <location>
        <position position="264"/>
    </location>
</feature>
<feature type="glycosylation site" description="N-linked (GlcNAc...) asparagine" evidence="2">
    <location>
        <position position="3"/>
    </location>
</feature>
<feature type="glycosylation site" description="N-linked (GlcNAc...) asparagine" evidence="2">
    <location>
        <position position="8"/>
    </location>
</feature>
<feature type="sequence conflict" description="In Ref. 1; AAK01859." evidence="9" ref="1">
    <original>V</original>
    <variation>I</variation>
    <location>
        <position position="24"/>
    </location>
</feature>
<keyword id="KW-1003">Cell membrane</keyword>
<keyword id="KW-0297">G-protein coupled receptor</keyword>
<keyword id="KW-0325">Glycoprotein</keyword>
<keyword id="KW-0472">Membrane</keyword>
<keyword id="KW-0597">Phosphoprotein</keyword>
<keyword id="KW-0675">Receptor</keyword>
<keyword id="KW-1185">Reference proteome</keyword>
<keyword id="KW-0807">Transducer</keyword>
<keyword id="KW-0812">Transmembrane</keyword>
<keyword id="KW-1133">Transmembrane helix</keyword>
<proteinExistence type="evidence at protein level"/>
<gene>
    <name type="primary">Gpr84</name>
</gene>
<sequence length="396" mass="43717">MWNSSDANFSCYHESVLGYRYFAVIWGVAVAVTGTVGNVLTLLALAIRPKLRTRFNLLIANLTLADLLYCTLLQPFSVDTYLHLHWRTGAVFCRIFGLLLFTSNSVSILTLCLIALGRYLLIAHPKLFPQVFSAKGIVLALVGSWVVGVTSFAPLWNVFVLVPVVCTCSFDRMRGRPYTTILMGIYFVLGLSSVGVFYCLIHRQVKRAARALDQYGLHQASIRSHQVAGTQEAMPGHFQELDSGVASRGPSEGISSEPVSAATTQTLEGDSSEAGGQGIRKAAQQIAERSLPEVHRKPRETAGARRATDAPSEFGKVTRMCFAVFLCFALSYIPFLLLNILDARGRAPRVVHMVAANLTWLNSCINPVLYAAMNRQFRHAYGSILKRGPQSFRRFH</sequence>
<organism>
    <name type="scientific">Mus musculus</name>
    <name type="common">Mouse</name>
    <dbReference type="NCBI Taxonomy" id="10090"/>
    <lineage>
        <taxon>Eukaryota</taxon>
        <taxon>Metazoa</taxon>
        <taxon>Chordata</taxon>
        <taxon>Craniata</taxon>
        <taxon>Vertebrata</taxon>
        <taxon>Euteleostomi</taxon>
        <taxon>Mammalia</taxon>
        <taxon>Eutheria</taxon>
        <taxon>Euarchontoglires</taxon>
        <taxon>Glires</taxon>
        <taxon>Rodentia</taxon>
        <taxon>Myomorpha</taxon>
        <taxon>Muroidea</taxon>
        <taxon>Muridae</taxon>
        <taxon>Murinae</taxon>
        <taxon>Mus</taxon>
        <taxon>Mus</taxon>
    </lineage>
</organism>
<evidence type="ECO:0000250" key="1">
    <source>
        <dbReference type="UniProtKB" id="Q9NQS5"/>
    </source>
</evidence>
<evidence type="ECO:0000255" key="2"/>
<evidence type="ECO:0000255" key="3">
    <source>
        <dbReference type="PROSITE-ProRule" id="PRU00521"/>
    </source>
</evidence>
<evidence type="ECO:0000256" key="4">
    <source>
        <dbReference type="SAM" id="MobiDB-lite"/>
    </source>
</evidence>
<evidence type="ECO:0000269" key="5">
    <source>
    </source>
</evidence>
<evidence type="ECO:0000269" key="6">
    <source>
    </source>
</evidence>
<evidence type="ECO:0000269" key="7">
    <source>
    </source>
</evidence>
<evidence type="ECO:0000269" key="8">
    <source>
    </source>
</evidence>
<evidence type="ECO:0000305" key="9"/>
<evidence type="ECO:0007744" key="10">
    <source>
    </source>
</evidence>
<name>GPR84_MOUSE</name>
<accession>Q8CIM5</accession>
<accession>Q99MX9</accession>
<dbReference type="EMBL" id="AF272948">
    <property type="protein sequence ID" value="AAK01859.1"/>
    <property type="molecule type" value="mRNA"/>
</dbReference>
<dbReference type="EMBL" id="BC023249">
    <property type="protein sequence ID" value="AAH23249.1"/>
    <property type="molecule type" value="mRNA"/>
</dbReference>
<dbReference type="CCDS" id="CCDS27902.1"/>
<dbReference type="RefSeq" id="NP_109645.1">
    <property type="nucleotide sequence ID" value="NM_030720.1"/>
</dbReference>
<dbReference type="SMR" id="Q8CIM5"/>
<dbReference type="BioGRID" id="219847">
    <property type="interactions" value="1"/>
</dbReference>
<dbReference type="FunCoup" id="Q8CIM5">
    <property type="interactions" value="119"/>
</dbReference>
<dbReference type="STRING" id="10090.ENSMUSP00000078753"/>
<dbReference type="BindingDB" id="Q8CIM5"/>
<dbReference type="ChEMBL" id="CHEMBL4523386"/>
<dbReference type="GlyCosmos" id="Q8CIM5">
    <property type="glycosylation" value="2 sites, No reported glycans"/>
</dbReference>
<dbReference type="GlyGen" id="Q8CIM5">
    <property type="glycosylation" value="2 sites"/>
</dbReference>
<dbReference type="iPTMnet" id="Q8CIM5"/>
<dbReference type="PhosphoSitePlus" id="Q8CIM5"/>
<dbReference type="SwissPalm" id="Q8CIM5"/>
<dbReference type="jPOST" id="Q8CIM5"/>
<dbReference type="PaxDb" id="10090-ENSMUSP00000078753"/>
<dbReference type="PeptideAtlas" id="Q8CIM5"/>
<dbReference type="ProteomicsDB" id="271458"/>
<dbReference type="DNASU" id="80910"/>
<dbReference type="GeneID" id="80910"/>
<dbReference type="KEGG" id="mmu:80910"/>
<dbReference type="UCSC" id="uc007xxy.1">
    <property type="organism name" value="mouse"/>
</dbReference>
<dbReference type="AGR" id="MGI:1934129"/>
<dbReference type="CTD" id="53831"/>
<dbReference type="MGI" id="MGI:1934129">
    <property type="gene designation" value="Gpr84"/>
</dbReference>
<dbReference type="eggNOG" id="KOG3656">
    <property type="taxonomic scope" value="Eukaryota"/>
</dbReference>
<dbReference type="InParanoid" id="Q8CIM5"/>
<dbReference type="OrthoDB" id="6117944at2759"/>
<dbReference type="PhylomeDB" id="Q8CIM5"/>
<dbReference type="TreeFam" id="TF333474"/>
<dbReference type="Reactome" id="R-MMU-418555">
    <property type="pathway name" value="G alpha (s) signalling events"/>
</dbReference>
<dbReference type="Reactome" id="R-MMU-6798695">
    <property type="pathway name" value="Neutrophil degranulation"/>
</dbReference>
<dbReference type="BioGRID-ORCS" id="80910">
    <property type="hits" value="7 hits in 80 CRISPR screens"/>
</dbReference>
<dbReference type="ChiTaRS" id="Gpr84">
    <property type="organism name" value="mouse"/>
</dbReference>
<dbReference type="PRO" id="PR:Q8CIM5"/>
<dbReference type="Proteomes" id="UP000000589">
    <property type="component" value="Unplaced"/>
</dbReference>
<dbReference type="RNAct" id="Q8CIM5">
    <property type="molecule type" value="protein"/>
</dbReference>
<dbReference type="GO" id="GO:0005886">
    <property type="term" value="C:plasma membrane"/>
    <property type="evidence" value="ECO:0007669"/>
    <property type="project" value="UniProtKB-SubCell"/>
</dbReference>
<dbReference type="GO" id="GO:0043235">
    <property type="term" value="C:receptor complex"/>
    <property type="evidence" value="ECO:0000266"/>
    <property type="project" value="MGI"/>
</dbReference>
<dbReference type="GO" id="GO:0004930">
    <property type="term" value="F:G protein-coupled receptor activity"/>
    <property type="evidence" value="ECO:0007669"/>
    <property type="project" value="UniProtKB-KW"/>
</dbReference>
<dbReference type="CDD" id="cd15210">
    <property type="entry name" value="7tmA_GPR84-like"/>
    <property type="match status" value="1"/>
</dbReference>
<dbReference type="Gene3D" id="1.20.1070.10">
    <property type="entry name" value="Rhodopsin 7-helix transmembrane proteins"/>
    <property type="match status" value="1"/>
</dbReference>
<dbReference type="InterPro" id="IPR000276">
    <property type="entry name" value="GPCR_Rhodpsn"/>
</dbReference>
<dbReference type="InterPro" id="IPR017452">
    <property type="entry name" value="GPCR_Rhodpsn_7TM"/>
</dbReference>
<dbReference type="PANTHER" id="PTHR24230">
    <property type="entry name" value="G-PROTEIN COUPLED RECEPTOR"/>
    <property type="match status" value="1"/>
</dbReference>
<dbReference type="PANTHER" id="PTHR24230:SF59">
    <property type="entry name" value="G-PROTEIN COUPLED RECEPTOR 84"/>
    <property type="match status" value="1"/>
</dbReference>
<dbReference type="Pfam" id="PF00001">
    <property type="entry name" value="7tm_1"/>
    <property type="match status" value="1"/>
</dbReference>
<dbReference type="PRINTS" id="PR00237">
    <property type="entry name" value="GPCRRHODOPSN"/>
</dbReference>
<dbReference type="SMART" id="SM01381">
    <property type="entry name" value="7TM_GPCR_Srsx"/>
    <property type="match status" value="1"/>
</dbReference>
<dbReference type="SUPFAM" id="SSF81321">
    <property type="entry name" value="Family A G protein-coupled receptor-like"/>
    <property type="match status" value="1"/>
</dbReference>
<dbReference type="PROSITE" id="PS50262">
    <property type="entry name" value="G_PROTEIN_RECEP_F1_2"/>
    <property type="match status" value="1"/>
</dbReference>
<protein>
    <recommendedName>
        <fullName>G-protein coupled receptor 84</fullName>
    </recommendedName>
</protein>
<comment type="function">
    <text evidence="1 6">G protein-coupled receptor that responds endogenously to dietary fatty acids or nutrient, specifically medium-chain free fatty acid (FFA) with carbon chain lengths of C9 to C14. Capric acid (C10:0), undecanoic acid (C11:0) and lauric acid (C12:0) are the most potent agonists (By similarity). In immune cells, functions as a pro-inflammatory receptor via 6-OAU and promotes the expression of pro-inflammatory mediators such as TNFalpha, IL-6 and IL-12B as well as stimulating chemotactic responses through activation of signaling mediators AKT, ERK and NF-kappa-B (by sim). In addition, triggers increased bacterial adhesion and phagocytosis in macrophages and regulates pro-inflammatory function via enhancing NLRP3 inflammasome activation (PubMed:34912006). Also plays an important role in inflammation by modulating neutrophil functions (PubMed:37016043). Mechanistically, promotes neutrophil chemotaxis, reactive oxygen species (ROS) production and degranulation via LYN-AKT/ERK pathway (PubMed:37016043). To regulate ROS production, communicates with the two formyl peptide receptors FPR2 and FPR1 to control the NADPH oxidase activity in neutrophils (PubMed:29973940).</text>
</comment>
<comment type="subunit">
    <text evidence="1">Interacts with ARRB2 and ARR3.</text>
</comment>
<comment type="subcellular location">
    <subcellularLocation>
        <location evidence="1">Cell membrane</location>
        <topology evidence="1">Multi-pass membrane protein</topology>
    </subcellularLocation>
</comment>
<comment type="tissue specificity">
    <text evidence="5 6">Expressed predominantly in hematopoietic tissues. Expressed mainly in the bone marrow with transcripts also detected in spleen, the lymph node, liver and the lung.</text>
</comment>
<comment type="induction">
    <text evidence="6 7 8">By lipopolysaccharide and other pro-inflammatory molecules in the monocyte/macrophage cell lines (PubMed:29973940). Also induced by high glucose concentrations and the presence of oxidized LDL (PubMed:16966319, PubMed:29973940).</text>
</comment>
<comment type="PTM">
    <text evidence="1">Phosphorylated by a subset of GPR84-activating ligands. Constitutively phosphorylated at Ser-221 and Ser-224 in the absence of 2-HTP. By contrast, Thr-263 and Thr-264 are phosphorylated only following prior cell treatment with 2-HTP.</text>
</comment>
<comment type="disruption phenotype">
    <text evidence="8">GPR84 deficiency ameliorates LPS-induced acute lung injury with significantly lower mRNA levels of IL1b, IL6 and TNFalpha in the lung tissue. Also ameliorates dextran sulfate sodium (DSS)-induced colitis by reducing the number of proinflammatory intestinal macrophages.</text>
</comment>
<comment type="similarity">
    <text evidence="3">Belongs to the G-protein coupled receptor 1 family.</text>
</comment>